<reference key="1">
    <citation type="journal article" date="2002" name="Proc. Natl. Acad. Sci. U.S.A.">
        <title>Genome sequence of the hyperthermophilic crenarchaeon Pyrobaculum aerophilum.</title>
        <authorList>
            <person name="Fitz-Gibbon S.T."/>
            <person name="Ladner H."/>
            <person name="Kim U.-J."/>
            <person name="Stetter K.O."/>
            <person name="Simon M.I."/>
            <person name="Miller J.H."/>
        </authorList>
    </citation>
    <scope>NUCLEOTIDE SEQUENCE [LARGE SCALE GENOMIC DNA]</scope>
    <source>
        <strain>ATCC 51768 / DSM 7523 / JCM 9630 / CIP 104966 / NBRC 100827 / IM2</strain>
    </source>
</reference>
<evidence type="ECO:0000256" key="1">
    <source>
        <dbReference type="SAM" id="MobiDB-lite"/>
    </source>
</evidence>
<evidence type="ECO:0000305" key="2"/>
<name>Y681_PYRAE</name>
<proteinExistence type="inferred from homology"/>
<protein>
    <recommendedName>
        <fullName>UPF0179 protein PAE0681</fullName>
    </recommendedName>
</protein>
<dbReference type="EMBL" id="AE009441">
    <property type="protein sequence ID" value="AAL62949.1"/>
    <property type="molecule type" value="Genomic_DNA"/>
</dbReference>
<dbReference type="RefSeq" id="WP_011007421.1">
    <property type="nucleotide sequence ID" value="NC_003364.1"/>
</dbReference>
<dbReference type="STRING" id="178306.PAE0681"/>
<dbReference type="EnsemblBacteria" id="AAL62949">
    <property type="protein sequence ID" value="AAL62949"/>
    <property type="gene ID" value="PAE0681"/>
</dbReference>
<dbReference type="GeneID" id="1465174"/>
<dbReference type="KEGG" id="pai:PAE0681"/>
<dbReference type="eggNOG" id="arCOG04477">
    <property type="taxonomic scope" value="Archaea"/>
</dbReference>
<dbReference type="HOGENOM" id="CLU_121764_0_0_2"/>
<dbReference type="InParanoid" id="Q8ZYP4"/>
<dbReference type="Proteomes" id="UP000002439">
    <property type="component" value="Chromosome"/>
</dbReference>
<dbReference type="HAMAP" id="MF_00498">
    <property type="entry name" value="UPF0179"/>
    <property type="match status" value="1"/>
</dbReference>
<dbReference type="InterPro" id="IPR005369">
    <property type="entry name" value="UPF0179"/>
</dbReference>
<dbReference type="PANTHER" id="PTHR40699">
    <property type="entry name" value="UPF0179 PROTEIN MJ1627"/>
    <property type="match status" value="1"/>
</dbReference>
<dbReference type="PANTHER" id="PTHR40699:SF1">
    <property type="entry name" value="UPF0179 PROTEIN MJ1627"/>
    <property type="match status" value="1"/>
</dbReference>
<dbReference type="Pfam" id="PF03684">
    <property type="entry name" value="UPF0179"/>
    <property type="match status" value="1"/>
</dbReference>
<dbReference type="PIRSF" id="PIRSF006595">
    <property type="entry name" value="UCP006595"/>
    <property type="match status" value="1"/>
</dbReference>
<comment type="similarity">
    <text evidence="2">Belongs to the UPF0179 family.</text>
</comment>
<feature type="chain" id="PRO_0000156872" description="UPF0179 protein PAE0681">
    <location>
        <begin position="1"/>
        <end position="167"/>
    </location>
</feature>
<feature type="region of interest" description="Disordered" evidence="1">
    <location>
        <begin position="142"/>
        <end position="167"/>
    </location>
</feature>
<feature type="compositionally biased region" description="Low complexity" evidence="1">
    <location>
        <begin position="145"/>
        <end position="157"/>
    </location>
</feature>
<keyword id="KW-1185">Reference proteome</keyword>
<gene>
    <name type="ordered locus">PAE0681</name>
</gene>
<organism>
    <name type="scientific">Pyrobaculum aerophilum (strain ATCC 51768 / DSM 7523 / JCM 9630 / CIP 104966 / NBRC 100827 / IM2)</name>
    <dbReference type="NCBI Taxonomy" id="178306"/>
    <lineage>
        <taxon>Archaea</taxon>
        <taxon>Thermoproteota</taxon>
        <taxon>Thermoprotei</taxon>
        <taxon>Thermoproteales</taxon>
        <taxon>Thermoproteaceae</taxon>
        <taxon>Pyrobaculum</taxon>
    </lineage>
</organism>
<sequence>MRRVVTLVSKEQAEVGHRFRVFSIPEECKDCRLYPVCMGRLAPGRSYKVVEVRPSMGQRCKITDGEMVPVVVEEAPVIGLLPLNKALEGVVVTFEEECAGCEGCPSDVVKKGEKIKVVKIVGRKRCRGREFAIVEFYVVSPPSPSGSSISATSQGPSRAPPSRRLLK</sequence>
<accession>Q8ZYP4</accession>